<gene>
    <name evidence="1" type="primary">secA</name>
    <name type="ordered locus">ABC3068</name>
</gene>
<sequence length="841" mass="95487">MLGLLRKIVGDPAQKQLKKNEKIVDQVEALADEMKQLSDEQLKNKTTEFKAKLEEGASLNDIVVPALAVAREAAGRVLNEYPYRVQLLGALALHQGNIAEMKTGEGKTLVGTIAVYVQALEGKGVHIVTVNNYLARRDLENYGRIFQFLGLTVGLNENGLTREEKQKAYAADVTYSTNNELGFDYLRDNMVLYKEQMVQRPLHFALIDEVDSILIDEARTPLIISGSVERKTKLYGQANTFVRVLKRDADYTYDEKTKSVQLTDEGVNKAERAFNIDNLYDQKHVQLNHHINQSLKAHVAMHRDADYVVEDGEVVIVDQFTGRLMKGRRYSDGLHQALEAKEGLEVQRESITLASITFQNYFRMYQKLAGMTGTAKTEEEEFRNIYGMDVMVIPTNKPVAREDRPDLIYKTMQGKFNAVVNEIAELHKTGRPVLVGTVNVETSEVVSKMLTRKRIPHHVLNAKNHEREAEIIEKAGHKGAVTIATNMAGRGTDIKLGPGVKELGGLHVLGTERHESRRIDNQLRGRAGRQGDVGSSQFYLSMEDELMRRFGSDNMKAMMEKLGMEDDQPIESSLVSRAVETAQKRVEGNNFDARKQVLQFDDVMREQREIIYRQRMEVLEADNLKTIVENMMKATVERVVQTHCPESLVQEEWDLAAVATYINGQLLSENGISEKELKGKEQEELIELITEKVLAAYHAKEAEVSSEQMREFEKVIMLRTVDRKWMNHIDQMDQLRQGIHLRAYGQNDPLREYRFEGFNMFEAMIAEIEEEVSMYVMKAQVQQNLKREEVAEGKAVRPSANGQEDKKAKRKPVRKAENIGRNDPCICGSGKKYKNCCGANR</sequence>
<name>SECA_SHOC1</name>
<reference key="1">
    <citation type="submission" date="2003-10" db="EMBL/GenBank/DDBJ databases">
        <title>The complete genome sequence of the alkaliphilic Bacillus clausii KSM-K16.</title>
        <authorList>
            <person name="Takaki Y."/>
            <person name="Kageyama Y."/>
            <person name="Shimamura S."/>
            <person name="Suzuki H."/>
            <person name="Nishi S."/>
            <person name="Hatada Y."/>
            <person name="Kawai S."/>
            <person name="Ito S."/>
            <person name="Horikoshi K."/>
        </authorList>
    </citation>
    <scope>NUCLEOTIDE SEQUENCE [LARGE SCALE GENOMIC DNA]</scope>
    <source>
        <strain>KSM-K16</strain>
    </source>
</reference>
<accession>Q5WDF8</accession>
<feature type="chain" id="PRO_0000318316" description="Protein translocase subunit SecA">
    <location>
        <begin position="1"/>
        <end position="841"/>
    </location>
</feature>
<feature type="region of interest" description="Disordered" evidence="2">
    <location>
        <begin position="788"/>
        <end position="822"/>
    </location>
</feature>
<feature type="binding site" evidence="1">
    <location>
        <position position="86"/>
    </location>
    <ligand>
        <name>ATP</name>
        <dbReference type="ChEBI" id="CHEBI:30616"/>
    </ligand>
</feature>
<feature type="binding site" evidence="1">
    <location>
        <begin position="104"/>
        <end position="108"/>
    </location>
    <ligand>
        <name>ATP</name>
        <dbReference type="ChEBI" id="CHEBI:30616"/>
    </ligand>
</feature>
<feature type="binding site" evidence="1">
    <location>
        <position position="493"/>
    </location>
    <ligand>
        <name>ATP</name>
        <dbReference type="ChEBI" id="CHEBI:30616"/>
    </ligand>
</feature>
<feature type="binding site" evidence="1">
    <location>
        <position position="825"/>
    </location>
    <ligand>
        <name>Zn(2+)</name>
        <dbReference type="ChEBI" id="CHEBI:29105"/>
    </ligand>
</feature>
<feature type="binding site" evidence="1">
    <location>
        <position position="827"/>
    </location>
    <ligand>
        <name>Zn(2+)</name>
        <dbReference type="ChEBI" id="CHEBI:29105"/>
    </ligand>
</feature>
<feature type="binding site" evidence="1">
    <location>
        <position position="836"/>
    </location>
    <ligand>
        <name>Zn(2+)</name>
        <dbReference type="ChEBI" id="CHEBI:29105"/>
    </ligand>
</feature>
<feature type="binding site" evidence="1">
    <location>
        <position position="837"/>
    </location>
    <ligand>
        <name>Zn(2+)</name>
        <dbReference type="ChEBI" id="CHEBI:29105"/>
    </ligand>
</feature>
<keyword id="KW-0067">ATP-binding</keyword>
<keyword id="KW-1003">Cell membrane</keyword>
<keyword id="KW-0963">Cytoplasm</keyword>
<keyword id="KW-0472">Membrane</keyword>
<keyword id="KW-0479">Metal-binding</keyword>
<keyword id="KW-0547">Nucleotide-binding</keyword>
<keyword id="KW-0653">Protein transport</keyword>
<keyword id="KW-1185">Reference proteome</keyword>
<keyword id="KW-1278">Translocase</keyword>
<keyword id="KW-0811">Translocation</keyword>
<keyword id="KW-0813">Transport</keyword>
<keyword id="KW-0862">Zinc</keyword>
<comment type="function">
    <text evidence="1">Part of the Sec protein translocase complex. Interacts with the SecYEG preprotein conducting channel. Has a central role in coupling the hydrolysis of ATP to the transfer of proteins into and across the cell membrane, serving as an ATP-driven molecular motor driving the stepwise translocation of polypeptide chains across the membrane.</text>
</comment>
<comment type="catalytic activity">
    <reaction evidence="1">
        <text>ATP + H2O + cellular proteinSide 1 = ADP + phosphate + cellular proteinSide 2.</text>
        <dbReference type="EC" id="7.4.2.8"/>
    </reaction>
</comment>
<comment type="cofactor">
    <cofactor evidence="1">
        <name>Zn(2+)</name>
        <dbReference type="ChEBI" id="CHEBI:29105"/>
    </cofactor>
    <text evidence="1">May bind 1 zinc ion per subunit.</text>
</comment>
<comment type="subunit">
    <text evidence="1">Monomer and homodimer. Part of the essential Sec protein translocation apparatus which comprises SecA, SecYEG and auxiliary proteins SecDF. Other proteins may also be involved.</text>
</comment>
<comment type="subcellular location">
    <subcellularLocation>
        <location evidence="1">Cell membrane</location>
        <topology evidence="1">Peripheral membrane protein</topology>
        <orientation evidence="1">Cytoplasmic side</orientation>
    </subcellularLocation>
    <subcellularLocation>
        <location evidence="1">Cytoplasm</location>
    </subcellularLocation>
    <text evidence="1">Distribution is 50-50.</text>
</comment>
<comment type="similarity">
    <text evidence="1">Belongs to the SecA family.</text>
</comment>
<evidence type="ECO:0000255" key="1">
    <source>
        <dbReference type="HAMAP-Rule" id="MF_01382"/>
    </source>
</evidence>
<evidence type="ECO:0000256" key="2">
    <source>
        <dbReference type="SAM" id="MobiDB-lite"/>
    </source>
</evidence>
<organism>
    <name type="scientific">Shouchella clausii (strain KSM-K16)</name>
    <name type="common">Alkalihalobacillus clausii</name>
    <dbReference type="NCBI Taxonomy" id="66692"/>
    <lineage>
        <taxon>Bacteria</taxon>
        <taxon>Bacillati</taxon>
        <taxon>Bacillota</taxon>
        <taxon>Bacilli</taxon>
        <taxon>Bacillales</taxon>
        <taxon>Bacillaceae</taxon>
        <taxon>Shouchella</taxon>
    </lineage>
</organism>
<protein>
    <recommendedName>
        <fullName evidence="1">Protein translocase subunit SecA</fullName>
        <ecNumber evidence="1">7.4.2.8</ecNumber>
    </recommendedName>
</protein>
<proteinExistence type="inferred from homology"/>
<dbReference type="EC" id="7.4.2.8" evidence="1"/>
<dbReference type="EMBL" id="AP006627">
    <property type="protein sequence ID" value="BAD65602.1"/>
    <property type="molecule type" value="Genomic_DNA"/>
</dbReference>
<dbReference type="RefSeq" id="WP_011247910.1">
    <property type="nucleotide sequence ID" value="NC_006582.1"/>
</dbReference>
<dbReference type="SMR" id="Q5WDF8"/>
<dbReference type="STRING" id="66692.ABC3068"/>
<dbReference type="KEGG" id="bcl:ABC3068"/>
<dbReference type="eggNOG" id="COG0653">
    <property type="taxonomic scope" value="Bacteria"/>
</dbReference>
<dbReference type="HOGENOM" id="CLU_005314_3_0_9"/>
<dbReference type="OrthoDB" id="9805579at2"/>
<dbReference type="Proteomes" id="UP000001168">
    <property type="component" value="Chromosome"/>
</dbReference>
<dbReference type="GO" id="GO:0031522">
    <property type="term" value="C:cell envelope Sec protein transport complex"/>
    <property type="evidence" value="ECO:0007669"/>
    <property type="project" value="TreeGrafter"/>
</dbReference>
<dbReference type="GO" id="GO:0005829">
    <property type="term" value="C:cytosol"/>
    <property type="evidence" value="ECO:0007669"/>
    <property type="project" value="TreeGrafter"/>
</dbReference>
<dbReference type="GO" id="GO:0005886">
    <property type="term" value="C:plasma membrane"/>
    <property type="evidence" value="ECO:0007669"/>
    <property type="project" value="UniProtKB-SubCell"/>
</dbReference>
<dbReference type="GO" id="GO:0005524">
    <property type="term" value="F:ATP binding"/>
    <property type="evidence" value="ECO:0007669"/>
    <property type="project" value="UniProtKB-UniRule"/>
</dbReference>
<dbReference type="GO" id="GO:0046872">
    <property type="term" value="F:metal ion binding"/>
    <property type="evidence" value="ECO:0007669"/>
    <property type="project" value="UniProtKB-KW"/>
</dbReference>
<dbReference type="GO" id="GO:0008564">
    <property type="term" value="F:protein-exporting ATPase activity"/>
    <property type="evidence" value="ECO:0007669"/>
    <property type="project" value="UniProtKB-EC"/>
</dbReference>
<dbReference type="GO" id="GO:0065002">
    <property type="term" value="P:intracellular protein transmembrane transport"/>
    <property type="evidence" value="ECO:0007669"/>
    <property type="project" value="UniProtKB-UniRule"/>
</dbReference>
<dbReference type="GO" id="GO:0017038">
    <property type="term" value="P:protein import"/>
    <property type="evidence" value="ECO:0007669"/>
    <property type="project" value="InterPro"/>
</dbReference>
<dbReference type="GO" id="GO:0006605">
    <property type="term" value="P:protein targeting"/>
    <property type="evidence" value="ECO:0007669"/>
    <property type="project" value="UniProtKB-UniRule"/>
</dbReference>
<dbReference type="GO" id="GO:0043952">
    <property type="term" value="P:protein transport by the Sec complex"/>
    <property type="evidence" value="ECO:0007669"/>
    <property type="project" value="TreeGrafter"/>
</dbReference>
<dbReference type="CDD" id="cd17928">
    <property type="entry name" value="DEXDc_SecA"/>
    <property type="match status" value="1"/>
</dbReference>
<dbReference type="CDD" id="cd18803">
    <property type="entry name" value="SF2_C_secA"/>
    <property type="match status" value="1"/>
</dbReference>
<dbReference type="FunFam" id="1.10.3060.10:FF:000002">
    <property type="entry name" value="Preprotein translocase subunit SecA"/>
    <property type="match status" value="1"/>
</dbReference>
<dbReference type="FunFam" id="3.40.50.300:FF:000429">
    <property type="entry name" value="Preprotein translocase subunit SecA"/>
    <property type="match status" value="1"/>
</dbReference>
<dbReference type="FunFam" id="3.90.1440.10:FF:000001">
    <property type="entry name" value="Preprotein translocase subunit SecA"/>
    <property type="match status" value="1"/>
</dbReference>
<dbReference type="Gene3D" id="1.10.3060.10">
    <property type="entry name" value="Helical scaffold and wing domains of SecA"/>
    <property type="match status" value="1"/>
</dbReference>
<dbReference type="Gene3D" id="3.40.50.300">
    <property type="entry name" value="P-loop containing nucleotide triphosphate hydrolases"/>
    <property type="match status" value="3"/>
</dbReference>
<dbReference type="Gene3D" id="3.90.1440.10">
    <property type="entry name" value="SecA, preprotein cross-linking domain"/>
    <property type="match status" value="1"/>
</dbReference>
<dbReference type="HAMAP" id="MF_01382">
    <property type="entry name" value="SecA"/>
    <property type="match status" value="1"/>
</dbReference>
<dbReference type="InterPro" id="IPR014001">
    <property type="entry name" value="Helicase_ATP-bd"/>
</dbReference>
<dbReference type="InterPro" id="IPR001650">
    <property type="entry name" value="Helicase_C-like"/>
</dbReference>
<dbReference type="InterPro" id="IPR027417">
    <property type="entry name" value="P-loop_NTPase"/>
</dbReference>
<dbReference type="InterPro" id="IPR004027">
    <property type="entry name" value="SEC_C_motif"/>
</dbReference>
<dbReference type="InterPro" id="IPR000185">
    <property type="entry name" value="SecA"/>
</dbReference>
<dbReference type="InterPro" id="IPR020937">
    <property type="entry name" value="SecA_CS"/>
</dbReference>
<dbReference type="InterPro" id="IPR011115">
    <property type="entry name" value="SecA_DEAD"/>
</dbReference>
<dbReference type="InterPro" id="IPR014018">
    <property type="entry name" value="SecA_motor_DEAD"/>
</dbReference>
<dbReference type="InterPro" id="IPR011130">
    <property type="entry name" value="SecA_preprotein_X-link_dom"/>
</dbReference>
<dbReference type="InterPro" id="IPR044722">
    <property type="entry name" value="SecA_SF2_C"/>
</dbReference>
<dbReference type="InterPro" id="IPR011116">
    <property type="entry name" value="SecA_Wing/Scaffold"/>
</dbReference>
<dbReference type="InterPro" id="IPR036266">
    <property type="entry name" value="SecA_Wing/Scaffold_sf"/>
</dbReference>
<dbReference type="InterPro" id="IPR036670">
    <property type="entry name" value="SecA_X-link_sf"/>
</dbReference>
<dbReference type="NCBIfam" id="NF006630">
    <property type="entry name" value="PRK09200.1"/>
    <property type="match status" value="1"/>
</dbReference>
<dbReference type="NCBIfam" id="NF009538">
    <property type="entry name" value="PRK12904.1"/>
    <property type="match status" value="1"/>
</dbReference>
<dbReference type="NCBIfam" id="TIGR00963">
    <property type="entry name" value="secA"/>
    <property type="match status" value="1"/>
</dbReference>
<dbReference type="PANTHER" id="PTHR30612:SF0">
    <property type="entry name" value="CHLOROPLAST PROTEIN-TRANSPORTING ATPASE"/>
    <property type="match status" value="1"/>
</dbReference>
<dbReference type="PANTHER" id="PTHR30612">
    <property type="entry name" value="SECA INNER MEMBRANE COMPONENT OF SEC PROTEIN SECRETION SYSTEM"/>
    <property type="match status" value="1"/>
</dbReference>
<dbReference type="Pfam" id="PF21090">
    <property type="entry name" value="P-loop_SecA"/>
    <property type="match status" value="2"/>
</dbReference>
<dbReference type="Pfam" id="PF02810">
    <property type="entry name" value="SEC-C"/>
    <property type="match status" value="1"/>
</dbReference>
<dbReference type="Pfam" id="PF07517">
    <property type="entry name" value="SecA_DEAD"/>
    <property type="match status" value="1"/>
</dbReference>
<dbReference type="Pfam" id="PF01043">
    <property type="entry name" value="SecA_PP_bind"/>
    <property type="match status" value="1"/>
</dbReference>
<dbReference type="Pfam" id="PF07516">
    <property type="entry name" value="SecA_SW"/>
    <property type="match status" value="1"/>
</dbReference>
<dbReference type="PRINTS" id="PR00906">
    <property type="entry name" value="SECA"/>
</dbReference>
<dbReference type="SMART" id="SM00957">
    <property type="entry name" value="SecA_DEAD"/>
    <property type="match status" value="1"/>
</dbReference>
<dbReference type="SMART" id="SM00958">
    <property type="entry name" value="SecA_PP_bind"/>
    <property type="match status" value="1"/>
</dbReference>
<dbReference type="SUPFAM" id="SSF81886">
    <property type="entry name" value="Helical scaffold and wing domains of SecA"/>
    <property type="match status" value="1"/>
</dbReference>
<dbReference type="SUPFAM" id="SSF52540">
    <property type="entry name" value="P-loop containing nucleoside triphosphate hydrolases"/>
    <property type="match status" value="2"/>
</dbReference>
<dbReference type="SUPFAM" id="SSF81767">
    <property type="entry name" value="Pre-protein crosslinking domain of SecA"/>
    <property type="match status" value="1"/>
</dbReference>
<dbReference type="PROSITE" id="PS01312">
    <property type="entry name" value="SECA"/>
    <property type="match status" value="1"/>
</dbReference>
<dbReference type="PROSITE" id="PS51196">
    <property type="entry name" value="SECA_MOTOR_DEAD"/>
    <property type="match status" value="1"/>
</dbReference>